<name>MIAA_THEP1</name>
<gene>
    <name evidence="1" type="primary">miaA</name>
    <name type="ordered locus">Tpet_0396</name>
</gene>
<sequence>MKIAIVGGPTAVGKTDIMIEVCEEIGAEIISMDSRQIYRYMDIGTAKPTSEQRRRVPHHMIDIIDPDEYYNAFMYRKDSLRAMEDVLRRGKIPVYVGGTGLYADALVRGIFEGVPADENIRKELRELERREPGILRKMLEEFDPEAATRIHPNDLKRTIRALEVYMKTGRRISELQKEAKGDDRFFIIVLTRERYELYERINKRVDKMIEMGLVDEVKRLLGMGYSKDLNSMKTIGYREVIDYLEGKYDFDKMVHLIKRNTRHFARRQIIWFKRYKEAVWYNLTFEDVGEVKEKLKKLIVENFSV</sequence>
<dbReference type="EC" id="2.5.1.75" evidence="1"/>
<dbReference type="EMBL" id="CP000702">
    <property type="protein sequence ID" value="ABQ46422.1"/>
    <property type="molecule type" value="Genomic_DNA"/>
</dbReference>
<dbReference type="RefSeq" id="WP_011943049.1">
    <property type="nucleotide sequence ID" value="NC_009486.1"/>
</dbReference>
<dbReference type="SMR" id="A5IJP9"/>
<dbReference type="STRING" id="390874.Tpet_0396"/>
<dbReference type="KEGG" id="tpt:Tpet_0396"/>
<dbReference type="eggNOG" id="COG0324">
    <property type="taxonomic scope" value="Bacteria"/>
</dbReference>
<dbReference type="HOGENOM" id="CLU_032616_0_1_0"/>
<dbReference type="Proteomes" id="UP000006558">
    <property type="component" value="Chromosome"/>
</dbReference>
<dbReference type="GO" id="GO:0005524">
    <property type="term" value="F:ATP binding"/>
    <property type="evidence" value="ECO:0007669"/>
    <property type="project" value="UniProtKB-UniRule"/>
</dbReference>
<dbReference type="GO" id="GO:0052381">
    <property type="term" value="F:tRNA dimethylallyltransferase activity"/>
    <property type="evidence" value="ECO:0007669"/>
    <property type="project" value="UniProtKB-UniRule"/>
</dbReference>
<dbReference type="GO" id="GO:0006400">
    <property type="term" value="P:tRNA modification"/>
    <property type="evidence" value="ECO:0007669"/>
    <property type="project" value="TreeGrafter"/>
</dbReference>
<dbReference type="FunFam" id="1.10.20.140:FF:000001">
    <property type="entry name" value="tRNA dimethylallyltransferase"/>
    <property type="match status" value="1"/>
</dbReference>
<dbReference type="Gene3D" id="1.10.20.140">
    <property type="match status" value="1"/>
</dbReference>
<dbReference type="Gene3D" id="3.40.50.300">
    <property type="entry name" value="P-loop containing nucleotide triphosphate hydrolases"/>
    <property type="match status" value="1"/>
</dbReference>
<dbReference type="HAMAP" id="MF_00185">
    <property type="entry name" value="IPP_trans"/>
    <property type="match status" value="1"/>
</dbReference>
<dbReference type="InterPro" id="IPR039657">
    <property type="entry name" value="Dimethylallyltransferase"/>
</dbReference>
<dbReference type="InterPro" id="IPR018022">
    <property type="entry name" value="IPT"/>
</dbReference>
<dbReference type="InterPro" id="IPR027417">
    <property type="entry name" value="P-loop_NTPase"/>
</dbReference>
<dbReference type="NCBIfam" id="TIGR00174">
    <property type="entry name" value="miaA"/>
    <property type="match status" value="1"/>
</dbReference>
<dbReference type="PANTHER" id="PTHR11088">
    <property type="entry name" value="TRNA DIMETHYLALLYLTRANSFERASE"/>
    <property type="match status" value="1"/>
</dbReference>
<dbReference type="PANTHER" id="PTHR11088:SF60">
    <property type="entry name" value="TRNA DIMETHYLALLYLTRANSFERASE"/>
    <property type="match status" value="1"/>
</dbReference>
<dbReference type="Pfam" id="PF01715">
    <property type="entry name" value="IPPT"/>
    <property type="match status" value="1"/>
</dbReference>
<dbReference type="SUPFAM" id="SSF52540">
    <property type="entry name" value="P-loop containing nucleoside triphosphate hydrolases"/>
    <property type="match status" value="1"/>
</dbReference>
<accession>A5IJP9</accession>
<comment type="function">
    <text evidence="1">Catalyzes the transfer of a dimethylallyl group onto the adenine at position 37 in tRNAs that read codons beginning with uridine, leading to the formation of N6-(dimethylallyl)adenosine (i(6)A).</text>
</comment>
<comment type="catalytic activity">
    <reaction evidence="1">
        <text>adenosine(37) in tRNA + dimethylallyl diphosphate = N(6)-dimethylallyladenosine(37) in tRNA + diphosphate</text>
        <dbReference type="Rhea" id="RHEA:26482"/>
        <dbReference type="Rhea" id="RHEA-COMP:10162"/>
        <dbReference type="Rhea" id="RHEA-COMP:10375"/>
        <dbReference type="ChEBI" id="CHEBI:33019"/>
        <dbReference type="ChEBI" id="CHEBI:57623"/>
        <dbReference type="ChEBI" id="CHEBI:74411"/>
        <dbReference type="ChEBI" id="CHEBI:74415"/>
        <dbReference type="EC" id="2.5.1.75"/>
    </reaction>
</comment>
<comment type="cofactor">
    <cofactor evidence="1">
        <name>Mg(2+)</name>
        <dbReference type="ChEBI" id="CHEBI:18420"/>
    </cofactor>
</comment>
<comment type="subunit">
    <text evidence="1">Monomer.</text>
</comment>
<comment type="similarity">
    <text evidence="1">Belongs to the IPP transferase family.</text>
</comment>
<keyword id="KW-0067">ATP-binding</keyword>
<keyword id="KW-0460">Magnesium</keyword>
<keyword id="KW-0547">Nucleotide-binding</keyword>
<keyword id="KW-0808">Transferase</keyword>
<keyword id="KW-0819">tRNA processing</keyword>
<organism>
    <name type="scientific">Thermotoga petrophila (strain ATCC BAA-488 / DSM 13995 / JCM 10881 / RKU-1)</name>
    <dbReference type="NCBI Taxonomy" id="390874"/>
    <lineage>
        <taxon>Bacteria</taxon>
        <taxon>Thermotogati</taxon>
        <taxon>Thermotogota</taxon>
        <taxon>Thermotogae</taxon>
        <taxon>Thermotogales</taxon>
        <taxon>Thermotogaceae</taxon>
        <taxon>Thermotoga</taxon>
    </lineage>
</organism>
<reference key="1">
    <citation type="submission" date="2007-05" db="EMBL/GenBank/DDBJ databases">
        <title>Complete sequence of Thermotoga petrophila RKU-1.</title>
        <authorList>
            <consortium name="US DOE Joint Genome Institute"/>
            <person name="Copeland A."/>
            <person name="Lucas S."/>
            <person name="Lapidus A."/>
            <person name="Barry K."/>
            <person name="Glavina del Rio T."/>
            <person name="Dalin E."/>
            <person name="Tice H."/>
            <person name="Pitluck S."/>
            <person name="Sims D."/>
            <person name="Brettin T."/>
            <person name="Bruce D."/>
            <person name="Detter J.C."/>
            <person name="Han C."/>
            <person name="Tapia R."/>
            <person name="Schmutz J."/>
            <person name="Larimer F."/>
            <person name="Land M."/>
            <person name="Hauser L."/>
            <person name="Kyrpides N."/>
            <person name="Mikhailova N."/>
            <person name="Nelson K."/>
            <person name="Gogarten J.P."/>
            <person name="Noll K."/>
            <person name="Richardson P."/>
        </authorList>
    </citation>
    <scope>NUCLEOTIDE SEQUENCE [LARGE SCALE GENOMIC DNA]</scope>
    <source>
        <strain>ATCC BAA-488 / DSM 13995 / JCM 10881 / RKU-1</strain>
    </source>
</reference>
<protein>
    <recommendedName>
        <fullName evidence="1">tRNA dimethylallyltransferase</fullName>
        <ecNumber evidence="1">2.5.1.75</ecNumber>
    </recommendedName>
    <alternativeName>
        <fullName evidence="1">Dimethylallyl diphosphate:tRNA dimethylallyltransferase</fullName>
        <shortName evidence="1">DMAPP:tRNA dimethylallyltransferase</shortName>
        <shortName evidence="1">DMATase</shortName>
    </alternativeName>
    <alternativeName>
        <fullName evidence="1">Isopentenyl-diphosphate:tRNA isopentenyltransferase</fullName>
        <shortName evidence="1">IPP transferase</shortName>
        <shortName evidence="1">IPPT</shortName>
        <shortName evidence="1">IPTase</shortName>
    </alternativeName>
</protein>
<feature type="chain" id="PRO_1000020680" description="tRNA dimethylallyltransferase">
    <location>
        <begin position="1"/>
        <end position="305"/>
    </location>
</feature>
<feature type="region of interest" description="Interaction with substrate tRNA" evidence="1">
    <location>
        <begin position="33"/>
        <end position="36"/>
    </location>
</feature>
<feature type="binding site" evidence="1">
    <location>
        <begin position="8"/>
        <end position="15"/>
    </location>
    <ligand>
        <name>ATP</name>
        <dbReference type="ChEBI" id="CHEBI:30616"/>
    </ligand>
</feature>
<feature type="binding site" evidence="1">
    <location>
        <begin position="10"/>
        <end position="15"/>
    </location>
    <ligand>
        <name>substrate</name>
    </ligand>
</feature>
<feature type="site" description="Interaction with substrate tRNA" evidence="1">
    <location>
        <position position="99"/>
    </location>
</feature>
<feature type="site" description="Interaction with substrate tRNA" evidence="1">
    <location>
        <position position="121"/>
    </location>
</feature>
<evidence type="ECO:0000255" key="1">
    <source>
        <dbReference type="HAMAP-Rule" id="MF_00185"/>
    </source>
</evidence>
<proteinExistence type="inferred from homology"/>